<organism>
    <name type="scientific">Thermoplasma volcanium (strain ATCC 51530 / DSM 4299 / JCM 9571 / NBRC 15438 / GSS1)</name>
    <dbReference type="NCBI Taxonomy" id="273116"/>
    <lineage>
        <taxon>Archaea</taxon>
        <taxon>Methanobacteriati</taxon>
        <taxon>Thermoplasmatota</taxon>
        <taxon>Thermoplasmata</taxon>
        <taxon>Thermoplasmatales</taxon>
        <taxon>Thermoplasmataceae</taxon>
        <taxon>Thermoplasma</taxon>
    </lineage>
</organism>
<sequence>MAFKRKVLGKTDYGRRLRLLKSKDRRFIVRITNKGIIAQIAEYSVNGDRILATITDKALSKYGIELRGNNLQICYLVGYAAGVEAQKAGVETAVLDIGRKKFRKGGRIAACLKGITDSGVDIPHGEDVFPDKKRLNGSHLKNPVKLNEAVKNFKKLEEKA</sequence>
<name>RL18_THEVO</name>
<feature type="chain" id="PRO_0000131421" description="Large ribosomal subunit protein uL18">
    <location>
        <begin position="1"/>
        <end position="160"/>
    </location>
</feature>
<comment type="function">
    <text evidence="1">This is one of the proteins that bind and probably mediate the attachment of the 5S RNA into the large ribosomal subunit, where it forms part of the central protuberance.</text>
</comment>
<comment type="subunit">
    <text evidence="1">Part of the 50S ribosomal subunit. Contacts the 5S and 23S rRNAs.</text>
</comment>
<comment type="similarity">
    <text evidence="1">Belongs to the universal ribosomal protein uL18 family.</text>
</comment>
<dbReference type="EMBL" id="BA000011">
    <property type="protein sequence ID" value="BAB59490.1"/>
    <property type="molecule type" value="Genomic_DNA"/>
</dbReference>
<dbReference type="RefSeq" id="WP_010916602.1">
    <property type="nucleotide sequence ID" value="NC_002689.2"/>
</dbReference>
<dbReference type="SMR" id="Q97BV7"/>
<dbReference type="STRING" id="273116.gene:9381125"/>
<dbReference type="PaxDb" id="273116-14324563"/>
<dbReference type="GeneID" id="1440860"/>
<dbReference type="KEGG" id="tvo:TVG0342046"/>
<dbReference type="eggNOG" id="arCOG04088">
    <property type="taxonomic scope" value="Archaea"/>
</dbReference>
<dbReference type="HOGENOM" id="CLU_056222_2_1_2"/>
<dbReference type="OrthoDB" id="8644at2157"/>
<dbReference type="PhylomeDB" id="Q97BV7"/>
<dbReference type="Proteomes" id="UP000001017">
    <property type="component" value="Chromosome"/>
</dbReference>
<dbReference type="GO" id="GO:0022625">
    <property type="term" value="C:cytosolic large ribosomal subunit"/>
    <property type="evidence" value="ECO:0007669"/>
    <property type="project" value="TreeGrafter"/>
</dbReference>
<dbReference type="GO" id="GO:0008097">
    <property type="term" value="F:5S rRNA binding"/>
    <property type="evidence" value="ECO:0007669"/>
    <property type="project" value="InterPro"/>
</dbReference>
<dbReference type="GO" id="GO:0003735">
    <property type="term" value="F:structural constituent of ribosome"/>
    <property type="evidence" value="ECO:0007669"/>
    <property type="project" value="InterPro"/>
</dbReference>
<dbReference type="GO" id="GO:0000027">
    <property type="term" value="P:ribosomal large subunit assembly"/>
    <property type="evidence" value="ECO:0007669"/>
    <property type="project" value="TreeGrafter"/>
</dbReference>
<dbReference type="GO" id="GO:0006412">
    <property type="term" value="P:translation"/>
    <property type="evidence" value="ECO:0007669"/>
    <property type="project" value="UniProtKB-UniRule"/>
</dbReference>
<dbReference type="CDD" id="cd00432">
    <property type="entry name" value="Ribosomal_L18_L5e"/>
    <property type="match status" value="1"/>
</dbReference>
<dbReference type="Gene3D" id="3.30.420.100">
    <property type="match status" value="1"/>
</dbReference>
<dbReference type="HAMAP" id="MF_01337_A">
    <property type="entry name" value="Ribosomal_uL18_A"/>
    <property type="match status" value="1"/>
</dbReference>
<dbReference type="InterPro" id="IPR005485">
    <property type="entry name" value="Rbsml_uL18_euk"/>
</dbReference>
<dbReference type="NCBIfam" id="NF006342">
    <property type="entry name" value="PRK08569.1"/>
    <property type="match status" value="1"/>
</dbReference>
<dbReference type="PANTHER" id="PTHR23410:SF12">
    <property type="entry name" value="LARGE RIBOSOMAL SUBUNIT PROTEIN UL18"/>
    <property type="match status" value="1"/>
</dbReference>
<dbReference type="PANTHER" id="PTHR23410">
    <property type="entry name" value="RIBOSOMAL PROTEIN L5-RELATED"/>
    <property type="match status" value="1"/>
</dbReference>
<dbReference type="Pfam" id="PF17144">
    <property type="entry name" value="Ribosomal_L5e"/>
    <property type="match status" value="1"/>
</dbReference>
<dbReference type="SUPFAM" id="SSF53137">
    <property type="entry name" value="Translational machinery components"/>
    <property type="match status" value="1"/>
</dbReference>
<keyword id="KW-0687">Ribonucleoprotein</keyword>
<keyword id="KW-0689">Ribosomal protein</keyword>
<keyword id="KW-0694">RNA-binding</keyword>
<keyword id="KW-0699">rRNA-binding</keyword>
<accession>Q97BV7</accession>
<proteinExistence type="inferred from homology"/>
<evidence type="ECO:0000255" key="1">
    <source>
        <dbReference type="HAMAP-Rule" id="MF_01337"/>
    </source>
</evidence>
<evidence type="ECO:0000305" key="2"/>
<protein>
    <recommendedName>
        <fullName evidence="1">Large ribosomal subunit protein uL18</fullName>
    </recommendedName>
    <alternativeName>
        <fullName evidence="2">50S ribosomal protein L18</fullName>
    </alternativeName>
</protein>
<reference key="1">
    <citation type="journal article" date="2000" name="Proc. Natl. Acad. Sci. U.S.A.">
        <title>Archaeal adaptation to higher temperatures revealed by genomic sequence of Thermoplasma volcanium.</title>
        <authorList>
            <person name="Kawashima T."/>
            <person name="Amano N."/>
            <person name="Koike H."/>
            <person name="Makino S."/>
            <person name="Higuchi S."/>
            <person name="Kawashima-Ohya Y."/>
            <person name="Watanabe K."/>
            <person name="Yamazaki M."/>
            <person name="Kanehori K."/>
            <person name="Kawamoto T."/>
            <person name="Nunoshiba T."/>
            <person name="Yamamoto Y."/>
            <person name="Aramaki H."/>
            <person name="Makino K."/>
            <person name="Suzuki M."/>
        </authorList>
    </citation>
    <scope>NUCLEOTIDE SEQUENCE [LARGE SCALE GENOMIC DNA]</scope>
    <source>
        <strain>ATCC 51530 / DSM 4299 / JCM 9571 / NBRC 15438 / GSS1</strain>
    </source>
</reference>
<gene>
    <name evidence="1" type="primary">rpl18</name>
    <name type="ordered locus">TV0348</name>
    <name type="ORF">TVG0342046</name>
</gene>